<organism>
    <name type="scientific">Shewanella oneidensis (strain ATCC 700550 / JCM 31522 / CIP 106686 / LMG 19005 / NCIMB 14063 / MR-1)</name>
    <dbReference type="NCBI Taxonomy" id="211586"/>
    <lineage>
        <taxon>Bacteria</taxon>
        <taxon>Pseudomonadati</taxon>
        <taxon>Pseudomonadota</taxon>
        <taxon>Gammaproteobacteria</taxon>
        <taxon>Alteromonadales</taxon>
        <taxon>Shewanellaceae</taxon>
        <taxon>Shewanella</taxon>
    </lineage>
</organism>
<name>TAL_SHEON</name>
<reference key="1">
    <citation type="journal article" date="2002" name="Nat. Biotechnol.">
        <title>Genome sequence of the dissimilatory metal ion-reducing bacterium Shewanella oneidensis.</title>
        <authorList>
            <person name="Heidelberg J.F."/>
            <person name="Paulsen I.T."/>
            <person name="Nelson K.E."/>
            <person name="Gaidos E.J."/>
            <person name="Nelson W.C."/>
            <person name="Read T.D."/>
            <person name="Eisen J.A."/>
            <person name="Seshadri R."/>
            <person name="Ward N.L."/>
            <person name="Methe B.A."/>
            <person name="Clayton R.A."/>
            <person name="Meyer T."/>
            <person name="Tsapin A."/>
            <person name="Scott J."/>
            <person name="Beanan M.J."/>
            <person name="Brinkac L.M."/>
            <person name="Daugherty S.C."/>
            <person name="DeBoy R.T."/>
            <person name="Dodson R.J."/>
            <person name="Durkin A.S."/>
            <person name="Haft D.H."/>
            <person name="Kolonay J.F."/>
            <person name="Madupu R."/>
            <person name="Peterson J.D."/>
            <person name="Umayam L.A."/>
            <person name="White O."/>
            <person name="Wolf A.M."/>
            <person name="Vamathevan J.J."/>
            <person name="Weidman J.F."/>
            <person name="Impraim M."/>
            <person name="Lee K."/>
            <person name="Berry K.J."/>
            <person name="Lee C."/>
            <person name="Mueller J."/>
            <person name="Khouri H.M."/>
            <person name="Gill J."/>
            <person name="Utterback T.R."/>
            <person name="McDonald L.A."/>
            <person name="Feldblyum T.V."/>
            <person name="Smith H.O."/>
            <person name="Venter J.C."/>
            <person name="Nealson K.H."/>
            <person name="Fraser C.M."/>
        </authorList>
    </citation>
    <scope>NUCLEOTIDE SEQUENCE [LARGE SCALE GENOMIC DNA]</scope>
    <source>
        <strain>ATCC 700550 / JCM 31522 / CIP 106686 / LMG 19005 / NCIMB 14063 / MR-1</strain>
    </source>
</reference>
<feature type="chain" id="PRO_0000173615" description="Transaldolase">
    <location>
        <begin position="1"/>
        <end position="318"/>
    </location>
</feature>
<feature type="active site" description="Schiff-base intermediate with substrate" evidence="2">
    <location>
        <position position="132"/>
    </location>
</feature>
<proteinExistence type="inferred from homology"/>
<sequence>MANTLEQLKSYTTIVADTGDIEAIKRYQPEDATTNPSLILKAAQIPEYSALIDNAIAWAKLQSTDIEQQIDDASDKLAVNIGVEILKLVPGRISTEVDARLSFDKEKSIAKAHKLVRLYQEAGVDKSRILIKLASTWEGICAAKELEQEGINCNLTLLFSFSQARACAEAGVYLISPFVGRILDWYKKDTGKDYDAVNDPGVVSVTEIYNYYKQHGYNTVVMGASFRNIGEIIELAGCDRLTIGPSLLEELANSQLAIQPKLVPTSTTVAVAEPLTEAQFRWEFNQDAMAVDKLAEGIRNFAIDQGKLEVMLKAKLAN</sequence>
<protein>
    <recommendedName>
        <fullName evidence="2">Transaldolase</fullName>
        <ecNumber evidence="2">2.2.1.2</ecNumber>
    </recommendedName>
</protein>
<gene>
    <name evidence="2" type="primary">tal</name>
    <name type="ordered locus">SO_3546</name>
</gene>
<evidence type="ECO:0000250" key="1"/>
<evidence type="ECO:0000255" key="2">
    <source>
        <dbReference type="HAMAP-Rule" id="MF_00492"/>
    </source>
</evidence>
<accession>Q8EBH2</accession>
<comment type="function">
    <text evidence="2">Transaldolase is important for the balance of metabolites in the pentose-phosphate pathway.</text>
</comment>
<comment type="catalytic activity">
    <reaction evidence="2">
        <text>D-sedoheptulose 7-phosphate + D-glyceraldehyde 3-phosphate = D-erythrose 4-phosphate + beta-D-fructose 6-phosphate</text>
        <dbReference type="Rhea" id="RHEA:17053"/>
        <dbReference type="ChEBI" id="CHEBI:16897"/>
        <dbReference type="ChEBI" id="CHEBI:57483"/>
        <dbReference type="ChEBI" id="CHEBI:57634"/>
        <dbReference type="ChEBI" id="CHEBI:59776"/>
        <dbReference type="EC" id="2.2.1.2"/>
    </reaction>
</comment>
<comment type="pathway">
    <text evidence="2">Carbohydrate degradation; pentose phosphate pathway; D-glyceraldehyde 3-phosphate and beta-D-fructose 6-phosphate from D-ribose 5-phosphate and D-xylulose 5-phosphate (non-oxidative stage): step 2/3.</text>
</comment>
<comment type="subunit">
    <text evidence="1">Homodimer.</text>
</comment>
<comment type="subcellular location">
    <subcellularLocation>
        <location evidence="2">Cytoplasm</location>
    </subcellularLocation>
</comment>
<comment type="similarity">
    <text evidence="2">Belongs to the transaldolase family. Type 1 subfamily.</text>
</comment>
<keyword id="KW-0963">Cytoplasm</keyword>
<keyword id="KW-0570">Pentose shunt</keyword>
<keyword id="KW-1185">Reference proteome</keyword>
<keyword id="KW-0704">Schiff base</keyword>
<keyword id="KW-0808">Transferase</keyword>
<dbReference type="EC" id="2.2.1.2" evidence="2"/>
<dbReference type="EMBL" id="AE014299">
    <property type="protein sequence ID" value="AAN56537.1"/>
    <property type="molecule type" value="Genomic_DNA"/>
</dbReference>
<dbReference type="RefSeq" id="NP_719093.1">
    <property type="nucleotide sequence ID" value="NC_004347.2"/>
</dbReference>
<dbReference type="RefSeq" id="WP_011073375.1">
    <property type="nucleotide sequence ID" value="NC_004347.2"/>
</dbReference>
<dbReference type="SMR" id="Q8EBH2"/>
<dbReference type="STRING" id="211586.SO_3546"/>
<dbReference type="PaxDb" id="211586-SO_3546"/>
<dbReference type="KEGG" id="son:SO_3546"/>
<dbReference type="PATRIC" id="fig|211586.12.peg.3440"/>
<dbReference type="eggNOG" id="COG0176">
    <property type="taxonomic scope" value="Bacteria"/>
</dbReference>
<dbReference type="HOGENOM" id="CLU_047470_0_1_6"/>
<dbReference type="OrthoDB" id="9809101at2"/>
<dbReference type="PhylomeDB" id="Q8EBH2"/>
<dbReference type="BioCyc" id="SONE211586:G1GMP-3306-MONOMER"/>
<dbReference type="UniPathway" id="UPA00115">
    <property type="reaction ID" value="UER00414"/>
</dbReference>
<dbReference type="Proteomes" id="UP000008186">
    <property type="component" value="Chromosome"/>
</dbReference>
<dbReference type="GO" id="GO:0005829">
    <property type="term" value="C:cytosol"/>
    <property type="evidence" value="ECO:0000318"/>
    <property type="project" value="GO_Central"/>
</dbReference>
<dbReference type="GO" id="GO:0004801">
    <property type="term" value="F:transaldolase activity"/>
    <property type="evidence" value="ECO:0000250"/>
    <property type="project" value="UniProtKB"/>
</dbReference>
<dbReference type="GO" id="GO:0005975">
    <property type="term" value="P:carbohydrate metabolic process"/>
    <property type="evidence" value="ECO:0007669"/>
    <property type="project" value="InterPro"/>
</dbReference>
<dbReference type="GO" id="GO:0009052">
    <property type="term" value="P:pentose-phosphate shunt, non-oxidative branch"/>
    <property type="evidence" value="ECO:0000318"/>
    <property type="project" value="GO_Central"/>
</dbReference>
<dbReference type="CDD" id="cd00957">
    <property type="entry name" value="Transaldolase_TalAB"/>
    <property type="match status" value="1"/>
</dbReference>
<dbReference type="FunFam" id="3.20.20.70:FF:000002">
    <property type="entry name" value="Transaldolase"/>
    <property type="match status" value="1"/>
</dbReference>
<dbReference type="Gene3D" id="3.20.20.70">
    <property type="entry name" value="Aldolase class I"/>
    <property type="match status" value="1"/>
</dbReference>
<dbReference type="HAMAP" id="MF_00492">
    <property type="entry name" value="Transaldolase_1"/>
    <property type="match status" value="1"/>
</dbReference>
<dbReference type="InterPro" id="IPR013785">
    <property type="entry name" value="Aldolase_TIM"/>
</dbReference>
<dbReference type="InterPro" id="IPR001585">
    <property type="entry name" value="TAL/FSA"/>
</dbReference>
<dbReference type="InterPro" id="IPR004730">
    <property type="entry name" value="Transaldolase_1"/>
</dbReference>
<dbReference type="InterPro" id="IPR018225">
    <property type="entry name" value="Transaldolase_AS"/>
</dbReference>
<dbReference type="NCBIfam" id="NF009001">
    <property type="entry name" value="PRK12346.1"/>
    <property type="match status" value="1"/>
</dbReference>
<dbReference type="NCBIfam" id="TIGR00874">
    <property type="entry name" value="talAB"/>
    <property type="match status" value="1"/>
</dbReference>
<dbReference type="PANTHER" id="PTHR10683">
    <property type="entry name" value="TRANSALDOLASE"/>
    <property type="match status" value="1"/>
</dbReference>
<dbReference type="PANTHER" id="PTHR10683:SF18">
    <property type="entry name" value="TRANSALDOLASE"/>
    <property type="match status" value="1"/>
</dbReference>
<dbReference type="Pfam" id="PF00923">
    <property type="entry name" value="TAL_FSA"/>
    <property type="match status" value="1"/>
</dbReference>
<dbReference type="SUPFAM" id="SSF51569">
    <property type="entry name" value="Aldolase"/>
    <property type="match status" value="1"/>
</dbReference>
<dbReference type="PROSITE" id="PS01054">
    <property type="entry name" value="TRANSALDOLASE_1"/>
    <property type="match status" value="1"/>
</dbReference>
<dbReference type="PROSITE" id="PS00958">
    <property type="entry name" value="TRANSALDOLASE_2"/>
    <property type="match status" value="1"/>
</dbReference>